<proteinExistence type="inferred from homology"/>
<protein>
    <recommendedName>
        <fullName evidence="1">Cathelicidin antimicrobial peptide</fullName>
    </recommendedName>
    <component>
        <recommendedName>
            <fullName evidence="1">Antibacterial peptide FALL-39</fullName>
        </recommendedName>
        <alternativeName>
            <fullName evidence="1">FALL-39 peptide antibiotic</fullName>
        </alternativeName>
    </component>
    <component>
        <recommendedName>
            <fullName evidence="1">Antibacterial peptide LL-37</fullName>
        </recommendedName>
    </component>
</protein>
<gene>
    <name evidence="1" type="primary">CAMP</name>
</gene>
<organism>
    <name type="scientific">Pongo pygmaeus</name>
    <name type="common">Bornean orangutan</name>
    <dbReference type="NCBI Taxonomy" id="9600"/>
    <lineage>
        <taxon>Eukaryota</taxon>
        <taxon>Metazoa</taxon>
        <taxon>Chordata</taxon>
        <taxon>Craniata</taxon>
        <taxon>Vertebrata</taxon>
        <taxon>Euteleostomi</taxon>
        <taxon>Mammalia</taxon>
        <taxon>Eutheria</taxon>
        <taxon>Euarchontoglires</taxon>
        <taxon>Primates</taxon>
        <taxon>Haplorrhini</taxon>
        <taxon>Catarrhini</taxon>
        <taxon>Hominidae</taxon>
        <taxon>Pongo</taxon>
    </lineage>
</organism>
<accession>Q1KLX2</accession>
<name>CAMP_PONPY</name>
<evidence type="ECO:0000250" key="1">
    <source>
        <dbReference type="UniProtKB" id="P49913"/>
    </source>
</evidence>
<evidence type="ECO:0000250" key="2">
    <source>
        <dbReference type="UniProtKB" id="P54229"/>
    </source>
</evidence>
<evidence type="ECO:0000255" key="3"/>
<evidence type="ECO:0000305" key="4"/>
<dbReference type="EMBL" id="DQ471370">
    <property type="protein sequence ID" value="ABE96634.1"/>
    <property type="molecule type" value="Genomic_DNA"/>
</dbReference>
<dbReference type="SMR" id="Q1KLX2"/>
<dbReference type="GO" id="GO:0005615">
    <property type="term" value="C:extracellular space"/>
    <property type="evidence" value="ECO:0007669"/>
    <property type="project" value="TreeGrafter"/>
</dbReference>
<dbReference type="GO" id="GO:0031982">
    <property type="term" value="C:vesicle"/>
    <property type="evidence" value="ECO:0007669"/>
    <property type="project" value="UniProtKB-SubCell"/>
</dbReference>
<dbReference type="GO" id="GO:0001530">
    <property type="term" value="F:lipopolysaccharide binding"/>
    <property type="evidence" value="ECO:0007669"/>
    <property type="project" value="TreeGrafter"/>
</dbReference>
<dbReference type="GO" id="GO:0061844">
    <property type="term" value="P:antimicrobial humoral immune response mediated by antimicrobial peptide"/>
    <property type="evidence" value="ECO:0007669"/>
    <property type="project" value="TreeGrafter"/>
</dbReference>
<dbReference type="GO" id="GO:0050829">
    <property type="term" value="P:defense response to Gram-negative bacterium"/>
    <property type="evidence" value="ECO:0007669"/>
    <property type="project" value="TreeGrafter"/>
</dbReference>
<dbReference type="GO" id="GO:0050830">
    <property type="term" value="P:defense response to Gram-positive bacterium"/>
    <property type="evidence" value="ECO:0007669"/>
    <property type="project" value="TreeGrafter"/>
</dbReference>
<dbReference type="GO" id="GO:0045087">
    <property type="term" value="P:innate immune response"/>
    <property type="evidence" value="ECO:0007669"/>
    <property type="project" value="UniProtKB-KW"/>
</dbReference>
<dbReference type="GO" id="GO:0042119">
    <property type="term" value="P:neutrophil activation"/>
    <property type="evidence" value="ECO:0000250"/>
    <property type="project" value="UniProtKB"/>
</dbReference>
<dbReference type="FunFam" id="3.10.450.10:FF:000003">
    <property type="entry name" value="Cathelicidin antimicrobial peptide"/>
    <property type="match status" value="1"/>
</dbReference>
<dbReference type="Gene3D" id="3.10.450.10">
    <property type="match status" value="1"/>
</dbReference>
<dbReference type="InterPro" id="IPR001894">
    <property type="entry name" value="Cathelicidin-like"/>
</dbReference>
<dbReference type="InterPro" id="IPR018216">
    <property type="entry name" value="Cathelicidin_CS"/>
</dbReference>
<dbReference type="InterPro" id="IPR022746">
    <property type="entry name" value="Cathlecidin_C"/>
</dbReference>
<dbReference type="InterPro" id="IPR046350">
    <property type="entry name" value="Cystatin_sf"/>
</dbReference>
<dbReference type="PANTHER" id="PTHR10206">
    <property type="entry name" value="CATHELICIDIN"/>
    <property type="match status" value="1"/>
</dbReference>
<dbReference type="PANTHER" id="PTHR10206:SF2">
    <property type="entry name" value="CATHELICIDIN ANTIMICROBIAL PEPTIDE"/>
    <property type="match status" value="1"/>
</dbReference>
<dbReference type="Pfam" id="PF12153">
    <property type="entry name" value="CAP18_C"/>
    <property type="match status" value="1"/>
</dbReference>
<dbReference type="Pfam" id="PF00666">
    <property type="entry name" value="Cathelicidins"/>
    <property type="match status" value="1"/>
</dbReference>
<dbReference type="SUPFAM" id="SSF54403">
    <property type="entry name" value="Cystatin/monellin"/>
    <property type="match status" value="1"/>
</dbReference>
<dbReference type="PROSITE" id="PS00947">
    <property type="entry name" value="CATHELICIDINS_2"/>
    <property type="match status" value="1"/>
</dbReference>
<sequence>MKTQMDGHSLGRWSLVLLLLGLVMPLAIVAQVLSYKEAVLHAIDGINQRSSDANLYRILDLDPSLTMDGDPDTPKPVSFTVKETVCPRRTQQSPEDCDFKKDGLVKRCVGTVTLNQARGSFDISCDKDNRRFALLGDFFRKAREKIGEEFKRIVQRIKDFLRNLVPRTES</sequence>
<reference key="1">
    <citation type="journal article" date="2006" name="J. Biol. Chem.">
        <title>Evolution of the primate cathelicidin. Correlation between structural variations and antimicrobial activity.</title>
        <authorList>
            <person name="Zelezetsky I."/>
            <person name="Pontillo A."/>
            <person name="Puzzi L."/>
            <person name="Antcheva N."/>
            <person name="Segat L."/>
            <person name="Pacor S."/>
            <person name="Crovella S."/>
            <person name="Tossi A."/>
        </authorList>
    </citation>
    <scope>NUCLEOTIDE SEQUENCE [GENOMIC DNA]</scope>
</reference>
<feature type="signal peptide" evidence="3">
    <location>
        <begin position="1"/>
        <end position="30"/>
    </location>
</feature>
<feature type="propeptide" id="PRO_0000251782" description="Cathelin-like domain (CLD)" evidence="1">
    <location>
        <begin position="31"/>
        <end position="131"/>
    </location>
</feature>
<feature type="peptide" id="PRO_0000251783" description="Antibacterial peptide FALL-39" evidence="1">
    <location>
        <begin position="132"/>
        <end position="170"/>
    </location>
</feature>
<feature type="peptide" id="PRO_0000251784" description="Antibacterial peptide LL-37" evidence="1">
    <location>
        <begin position="134"/>
        <end position="170"/>
    </location>
</feature>
<feature type="region of interest" description="Active core" evidence="1">
    <location>
        <begin position="150"/>
        <end position="162"/>
    </location>
</feature>
<feature type="disulfide bond" evidence="1">
    <location>
        <begin position="86"/>
        <end position="97"/>
    </location>
</feature>
<feature type="disulfide bond" evidence="1">
    <location>
        <begin position="108"/>
        <end position="125"/>
    </location>
</feature>
<comment type="function">
    <text evidence="1">Antimicrobial protein that is an integral component of the innate immune system (By similarity). Binds to bacterial lipopolysaccharides (LPS) (By similarity). Acts via neutrophil N-formyl peptide receptors to enhance the release of CXCL2 (By similarity). Postsecretory processing generates multiple cathelicidin antimicrobial peptides with various lengths which act as a topical antimicrobial defense in sweat on skin (By similarity). The unprocessed precursor form, cathelicidin antimicrobial peptide, inhibits the growth of Gram-negative E.coli and E.aerogenes with efficiencies comparable to that of the mature peptide LL-37 (in vitro) (By similarity).</text>
</comment>
<comment type="function">
    <molecule>Antibacterial peptide LL-37</molecule>
    <text evidence="1">Antimicrobial peptide that is an integral component of the innate immune system (By similarity). Binds to bacterial lipopolysaccharides (LPS) (By similarity). Causes membrane permeabilization by forming transmembrane pores (in vitro) (By similarity). Causes lysis of E.coli (By similarity). Exhibits antimicrobial activity against Gram-negative bacteria such as P.aeruginosa, S.typhimurium, E.aerogenes, E.coli and P.syringae, Gram-positive bacteria such as L.monocytogenes, S.epidermidis, S.pyogenes and S.aureus, as well as vancomycin-resistant enterococci (in vitro) (By similarity). Exhibits antimicrobial activity against methicillin-resistant S.aureus, P.mirabilis, and C.albicans in low-salt media, but not in media containing 100 mM NaCl (in vitro) (By similarity). Forms chiral supramolecular assemblies with quinolone signal (PQS) molecules of P.aeruginosa, which may lead to interference of bacterial quorum signaling and perturbance of bacterial biofilm formation (By similarity). May form supramolecular fiber-like assemblies on bacterial membranes (By similarity). Induces cytokine and chemokine producation as well as TNF/TNFA and CSF2/GMCSF production in normal human keratinocytes (By similarity). Exhibits hemolytic activity against red blood cells (By similarity).</text>
</comment>
<comment type="function">
    <molecule>Antibacterial peptide FALL-39</molecule>
    <text evidence="1">Exhibits antimicrobial activity against E.coli and B.megaterium (in vitro).</text>
</comment>
<comment type="subunit">
    <molecule>Antibacterial peptide LL-37</molecule>
    <text evidence="1">Monomer, homodimer or homotrimer (in vitro) (By similarity). Oligomerizes as tetra- or hexamer in solution (in vitro) (By similarity).</text>
</comment>
<comment type="subcellular location">
    <subcellularLocation>
        <location evidence="2">Secreted</location>
    </subcellularLocation>
    <subcellularLocation>
        <location evidence="2">Vesicle</location>
    </subcellularLocation>
    <text evidence="2">Stored as pro-peptide in granules and phagolysosomes of neutrophils (By similarity). Secreted in sweat onto skin (By similarity).</text>
</comment>
<comment type="domain">
    <text evidence="2">The cathelin-like domain (CLD), which is the propeptide part, does not seem to exhibit auto-inhibitory function, as it does not inhibit the antibacterial activity of antibacterial peptide LL-37.</text>
</comment>
<comment type="domain">
    <molecule>Antibacterial peptide LL-37</molecule>
    <text evidence="2">Undergoes conformational change in the presence of lipid A, transitioning from a random coil to an alpha-helical structure.</text>
</comment>
<comment type="domain">
    <molecule>Antibacterial peptide LL-37</molecule>
    <text evidence="2">Residues 17-29 of LL-37 represent the active core of the antimicrobial peptide. Forms ribbon-like fibrils and exhibits antibacterial activity against Gram-positive M.luteus (By similarity). Also exhibits antibacterial activity against Gram-negative E.coli and P.fluorescens (By similarity).</text>
</comment>
<comment type="PTM">
    <text evidence="1">Proteolytically cleaved by proteinase PRTN3 into antibacterial peptide LL-37 (By similarity). Proteolytically cleaved by cathepsin CTSG and neutrophil elastase ELANE (By similarity).</text>
</comment>
<comment type="PTM">
    <molecule>Antibacterial peptide LL-37</molecule>
    <text evidence="1">Resistant to proteolytic degradation in solution, and when bound to both zwitterionic (mimicking mammalian membranes) and negatively charged membranes (mimicking bacterial membranes).</text>
</comment>
<comment type="PTM">
    <text evidence="1">After secretion onto the skin surface, the CAMP gene product is processed by a serine protease-dependent mechanism into multiple novel antimicrobial peptides distinct from and shorter than cathelicidin LL-37 (By similarity). These peptides show enhanced antimicrobial action, acquiring the ability to kill skin pathogens such as S.aureus, E.coli and C.albicans. These peptides have lost the ability to stimulate CXCL8/IL8 release from keratinocytes (By similarity). The peptides act synergistically, killing bacteria at lower concentrations when present together, and maintain activity at increased salt condition (By similarity).</text>
</comment>
<comment type="similarity">
    <text evidence="4">Belongs to the cathelicidin family.</text>
</comment>
<keyword id="KW-0044">Antibiotic</keyword>
<keyword id="KW-0929">Antimicrobial</keyword>
<keyword id="KW-0165">Cleavage on pair of basic residues</keyword>
<keyword id="KW-1015">Disulfide bond</keyword>
<keyword id="KW-0391">Immunity</keyword>
<keyword id="KW-0399">Innate immunity</keyword>
<keyword id="KW-0964">Secreted</keyword>
<keyword id="KW-0732">Signal</keyword>